<comment type="function">
    <text evidence="1">This b-type cytochrome is tightly associated with the reaction center of photosystem II (PSII). PSII is a light-driven water:plastoquinone oxidoreductase that uses light energy to abstract electrons from H(2)O, generating O(2) and a proton gradient subsequently used for ATP formation. It consists of a core antenna complex that captures photons, and an electron transfer chain that converts photonic excitation into a charge separation.</text>
</comment>
<comment type="cofactor">
    <cofactor evidence="1">
        <name>heme b</name>
        <dbReference type="ChEBI" id="CHEBI:60344"/>
    </cofactor>
    <text evidence="1">With its partner (PsbF) binds heme. PSII binds additional chlorophylls, carotenoids and specific lipids.</text>
</comment>
<comment type="subunit">
    <text evidence="1">Heterodimer of an alpha subunit and a beta subunit. PSII is composed of 1 copy each of membrane proteins PsbA, PsbB, PsbC, PsbD, PsbE, PsbF, PsbH, PsbI, PsbJ, PsbK, PsbL, PsbM, PsbT, PsbX, PsbY, PsbZ, Psb30/Ycf12, at least 3 peripheral proteins of the oxygen-evolving complex and a large number of cofactors. It forms dimeric complexes.</text>
</comment>
<comment type="subcellular location">
    <subcellularLocation>
        <location evidence="1">Plastid</location>
        <location evidence="1">Chloroplast thylakoid membrane</location>
        <topology evidence="1">Single-pass membrane protein</topology>
    </subcellularLocation>
</comment>
<comment type="similarity">
    <text evidence="1">Belongs to the PsbE/PsbF family.</text>
</comment>
<name>PSBE_OSTTA</name>
<accession>Q0P3N6</accession>
<protein>
    <recommendedName>
        <fullName evidence="1">Cytochrome b559 subunit alpha</fullName>
    </recommendedName>
    <alternativeName>
        <fullName evidence="1">PSII reaction center subunit V</fullName>
    </alternativeName>
</protein>
<keyword id="KW-0150">Chloroplast</keyword>
<keyword id="KW-0249">Electron transport</keyword>
<keyword id="KW-0349">Heme</keyword>
<keyword id="KW-0408">Iron</keyword>
<keyword id="KW-0472">Membrane</keyword>
<keyword id="KW-0479">Metal-binding</keyword>
<keyword id="KW-0602">Photosynthesis</keyword>
<keyword id="KW-0604">Photosystem II</keyword>
<keyword id="KW-0934">Plastid</keyword>
<keyword id="KW-1185">Reference proteome</keyword>
<keyword id="KW-0793">Thylakoid</keyword>
<keyword id="KW-0812">Transmembrane</keyword>
<keyword id="KW-1133">Transmembrane helix</keyword>
<keyword id="KW-0813">Transport</keyword>
<reference key="1">
    <citation type="journal article" date="2007" name="Mol. Biol. Evol.">
        <title>The complete chloroplast and mitochondrial DNA sequence of Ostreococcus tauri: organelle genomes of the smallest eukaryote are examples of compaction.</title>
        <authorList>
            <person name="Robbens S."/>
            <person name="Derelle E."/>
            <person name="Ferraz C."/>
            <person name="Wuyts J."/>
            <person name="Moreau H."/>
            <person name="Van de Peer Y."/>
        </authorList>
    </citation>
    <scope>NUCLEOTIDE SEQUENCE [LARGE SCALE GENOMIC DNA]</scope>
    <source>
        <strain>OTTH0595</strain>
    </source>
</reference>
<evidence type="ECO:0000255" key="1">
    <source>
        <dbReference type="HAMAP-Rule" id="MF_00642"/>
    </source>
</evidence>
<organism>
    <name type="scientific">Ostreococcus tauri</name>
    <dbReference type="NCBI Taxonomy" id="70448"/>
    <lineage>
        <taxon>Eukaryota</taxon>
        <taxon>Viridiplantae</taxon>
        <taxon>Chlorophyta</taxon>
        <taxon>Mamiellophyceae</taxon>
        <taxon>Mamiellales</taxon>
        <taxon>Bathycoccaceae</taxon>
        <taxon>Ostreococcus</taxon>
    </lineage>
</organism>
<dbReference type="EMBL" id="CR954199">
    <property type="protein sequence ID" value="CAL36341.1"/>
    <property type="molecule type" value="Genomic_DNA"/>
</dbReference>
<dbReference type="RefSeq" id="YP_717219.1">
    <property type="nucleotide sequence ID" value="NC_008289.1"/>
</dbReference>
<dbReference type="SMR" id="Q0P3N6"/>
<dbReference type="FunCoup" id="Q0P3N6">
    <property type="interactions" value="15"/>
</dbReference>
<dbReference type="STRING" id="70448.Q0P3N6"/>
<dbReference type="GeneID" id="4238884"/>
<dbReference type="KEGG" id="ota:OstapCp16"/>
<dbReference type="eggNOG" id="ENOG502S3QA">
    <property type="taxonomic scope" value="Eukaryota"/>
</dbReference>
<dbReference type="InParanoid" id="Q0P3N6"/>
<dbReference type="OrthoDB" id="1839964at2759"/>
<dbReference type="Proteomes" id="UP000009170">
    <property type="component" value="Chloroplast"/>
</dbReference>
<dbReference type="GO" id="GO:0009535">
    <property type="term" value="C:chloroplast thylakoid membrane"/>
    <property type="evidence" value="ECO:0007669"/>
    <property type="project" value="UniProtKB-SubCell"/>
</dbReference>
<dbReference type="GO" id="GO:0009539">
    <property type="term" value="C:photosystem II reaction center"/>
    <property type="evidence" value="ECO:0007669"/>
    <property type="project" value="InterPro"/>
</dbReference>
<dbReference type="GO" id="GO:0009055">
    <property type="term" value="F:electron transfer activity"/>
    <property type="evidence" value="ECO:0007669"/>
    <property type="project" value="UniProtKB-UniRule"/>
</dbReference>
<dbReference type="GO" id="GO:0020037">
    <property type="term" value="F:heme binding"/>
    <property type="evidence" value="ECO:0007669"/>
    <property type="project" value="InterPro"/>
</dbReference>
<dbReference type="GO" id="GO:0005506">
    <property type="term" value="F:iron ion binding"/>
    <property type="evidence" value="ECO:0007669"/>
    <property type="project" value="UniProtKB-UniRule"/>
</dbReference>
<dbReference type="GO" id="GO:0009767">
    <property type="term" value="P:photosynthetic electron transport chain"/>
    <property type="evidence" value="ECO:0007669"/>
    <property type="project" value="InterPro"/>
</dbReference>
<dbReference type="Gene3D" id="1.20.5.860">
    <property type="entry name" value="Photosystem II cytochrome b559, alpha subunit"/>
    <property type="match status" value="1"/>
</dbReference>
<dbReference type="HAMAP" id="MF_00642">
    <property type="entry name" value="PSII_PsbE"/>
    <property type="match status" value="1"/>
</dbReference>
<dbReference type="InterPro" id="IPR006217">
    <property type="entry name" value="PSII_cyt_b559_asu"/>
</dbReference>
<dbReference type="InterPro" id="IPR037025">
    <property type="entry name" value="PSII_cyt_b559_asu_sf"/>
</dbReference>
<dbReference type="InterPro" id="IPR006216">
    <property type="entry name" value="PSII_cyt_b559_CS"/>
</dbReference>
<dbReference type="InterPro" id="IPR013081">
    <property type="entry name" value="PSII_cyt_b559_N"/>
</dbReference>
<dbReference type="InterPro" id="IPR013082">
    <property type="entry name" value="PSII_cytb559_asu_lum"/>
</dbReference>
<dbReference type="NCBIfam" id="TIGR01332">
    <property type="entry name" value="cyt_b559_alpha"/>
    <property type="match status" value="1"/>
</dbReference>
<dbReference type="PANTHER" id="PTHR33391">
    <property type="entry name" value="CYTOCHROME B559 SUBUNIT BETA-RELATED"/>
    <property type="match status" value="1"/>
</dbReference>
<dbReference type="PANTHER" id="PTHR33391:SF9">
    <property type="entry name" value="CYTOCHROME B559 SUBUNIT BETA-RELATED"/>
    <property type="match status" value="1"/>
</dbReference>
<dbReference type="Pfam" id="PF00283">
    <property type="entry name" value="Cytochrom_B559"/>
    <property type="match status" value="1"/>
</dbReference>
<dbReference type="Pfam" id="PF00284">
    <property type="entry name" value="Cytochrom_B559a"/>
    <property type="match status" value="1"/>
</dbReference>
<dbReference type="PIRSF" id="PIRSF000036">
    <property type="entry name" value="PsbE"/>
    <property type="match status" value="1"/>
</dbReference>
<dbReference type="SUPFAM" id="SSF161045">
    <property type="entry name" value="Cytochrome b559 subunits"/>
    <property type="match status" value="1"/>
</dbReference>
<dbReference type="PROSITE" id="PS00537">
    <property type="entry name" value="CYTOCHROME_B559"/>
    <property type="match status" value="1"/>
</dbReference>
<proteinExistence type="inferred from homology"/>
<geneLocation type="chloroplast"/>
<gene>
    <name evidence="1" type="primary">psbE</name>
    <name type="ordered locus">OtCpg00160</name>
</gene>
<sequence length="82" mass="9225">MSGSTGERPFSDIVTSIRYWVIHSVTIPSLFIAGWLFVSTGLAYDVFGTPRPNEYFTEERQELPLISDRYGALAQLDDLVPN</sequence>
<feature type="chain" id="PRO_0000275713" description="Cytochrome b559 subunit alpha">
    <location>
        <begin position="1"/>
        <end position="82"/>
    </location>
</feature>
<feature type="transmembrane region" description="Helical" evidence="1">
    <location>
        <begin position="21"/>
        <end position="35"/>
    </location>
</feature>
<feature type="binding site" description="axial binding residue" evidence="1">
    <location>
        <position position="23"/>
    </location>
    <ligand>
        <name>heme</name>
        <dbReference type="ChEBI" id="CHEBI:30413"/>
        <note>ligand shared with beta subunit</note>
    </ligand>
    <ligandPart>
        <name>Fe</name>
        <dbReference type="ChEBI" id="CHEBI:18248"/>
    </ligandPart>
</feature>